<proteinExistence type="predicted"/>
<keyword id="KW-1185">Reference proteome</keyword>
<reference key="1">
    <citation type="journal article" date="1993" name="Mol. Microbiol.">
        <title>DNA sequence, structure and gene expression of mycobacteriophage L5: a phage system for mycobacterial genetics.</title>
        <authorList>
            <person name="Hatfull G.F."/>
            <person name="Sarkis G.J."/>
        </authorList>
    </citation>
    <scope>NUCLEOTIDE SEQUENCE [LARGE SCALE GENOMIC DNA]</scope>
</reference>
<gene>
    <name type="primary">55</name>
</gene>
<organism>
    <name type="scientific">Mycobacterium phage L5</name>
    <name type="common">Mycobacteriophage L5</name>
    <dbReference type="NCBI Taxonomy" id="31757"/>
    <lineage>
        <taxon>Viruses</taxon>
        <taxon>Duplodnaviria</taxon>
        <taxon>Heunggongvirae</taxon>
        <taxon>Uroviricota</taxon>
        <taxon>Caudoviricetes</taxon>
        <taxon>Fromanvirus</taxon>
    </lineage>
</organism>
<protein>
    <recommendedName>
        <fullName>Gene 55 protein</fullName>
    </recommendedName>
    <alternativeName>
        <fullName>Gp55</fullName>
    </alternativeName>
</protein>
<organismHost>
    <name type="scientific">Mycobacterium</name>
    <dbReference type="NCBI Taxonomy" id="1763"/>
</organismHost>
<evidence type="ECO:0000256" key="1">
    <source>
        <dbReference type="SAM" id="MobiDB-lite"/>
    </source>
</evidence>
<name>VG55_BPML5</name>
<accession>Q05265</accession>
<dbReference type="EMBL" id="Z18946">
    <property type="protein sequence ID" value="CAA79431.1"/>
    <property type="molecule type" value="Genomic_DNA"/>
</dbReference>
<dbReference type="PIR" id="S31000">
    <property type="entry name" value="S31000"/>
</dbReference>
<dbReference type="RefSeq" id="NP_039719.1">
    <property type="nucleotide sequence ID" value="NC_001335.1"/>
</dbReference>
<dbReference type="GeneID" id="2942978"/>
<dbReference type="KEGG" id="vg:2942978"/>
<dbReference type="OrthoDB" id="22240at10239"/>
<dbReference type="Proteomes" id="UP000002123">
    <property type="component" value="Genome"/>
</dbReference>
<dbReference type="InterPro" id="IPR045958">
    <property type="entry name" value="DUF6378"/>
</dbReference>
<dbReference type="Pfam" id="PF19905">
    <property type="entry name" value="DUF6378"/>
    <property type="match status" value="1"/>
</dbReference>
<feature type="chain" id="PRO_0000164785" description="Gene 55 protein">
    <location>
        <begin position="1"/>
        <end position="156"/>
    </location>
</feature>
<feature type="region of interest" description="Disordered" evidence="1">
    <location>
        <begin position="132"/>
        <end position="156"/>
    </location>
</feature>
<sequence>MSILTTAEEIINGQRAQDYGDAKENHERIATLWGAYKRGVEFTPEDVAVMMILLKIARFMENGYHQDTVVDIAGYAGVLEKMQLPEDERYPKGPRQWDTLLDVPADVKTVTNATGVKWIYYPNGLHHTKVGKRRWSGGNASSHEERMRGPFTEVAE</sequence>